<protein>
    <recommendedName>
        <fullName>Dihydrolipoyl dehydrogenase, mitochondrial</fullName>
        <ecNumber evidence="3">1.8.1.4</ecNumber>
    </recommendedName>
    <alternativeName>
        <fullName>Dihydrolipoamide dehydrogenase</fullName>
    </alternativeName>
</protein>
<keyword id="KW-0007">Acetylation</keyword>
<keyword id="KW-0966">Cell projection</keyword>
<keyword id="KW-0969">Cilium</keyword>
<keyword id="KW-0968">Cytoplasmic vesicle</keyword>
<keyword id="KW-1015">Disulfide bond</keyword>
<keyword id="KW-0274">FAD</keyword>
<keyword id="KW-0282">Flagellum</keyword>
<keyword id="KW-0285">Flavoprotein</keyword>
<keyword id="KW-0496">Mitochondrion</keyword>
<keyword id="KW-0520">NAD</keyword>
<keyword id="KW-0539">Nucleus</keyword>
<keyword id="KW-0560">Oxidoreductase</keyword>
<keyword id="KW-0597">Phosphoprotein</keyword>
<keyword id="KW-0676">Redox-active center</keyword>
<keyword id="KW-1185">Reference proteome</keyword>
<keyword id="KW-0809">Transit peptide</keyword>
<accession>Q60HG3</accession>
<accession>Q4R8W9</accession>
<reference key="1">
    <citation type="submission" date="2003-10" db="EMBL/GenBank/DDBJ databases">
        <title>Isolation and characterization of cDNA for macaque neurological disease genes.</title>
        <authorList>
            <person name="Kusuda J."/>
            <person name="Osada N."/>
            <person name="Tanuma R."/>
            <person name="Hirata M."/>
            <person name="Sugano S."/>
            <person name="Hashimoto K."/>
        </authorList>
    </citation>
    <scope>NUCLEOTIDE SEQUENCE [LARGE SCALE MRNA]</scope>
    <source>
        <tissue>Frontal cortex</tissue>
    </source>
</reference>
<reference key="2">
    <citation type="submission" date="2005-06" db="EMBL/GenBank/DDBJ databases">
        <title>DNA sequences of macaque genes expressed in brain or testis and its evolutionary implications.</title>
        <authorList>
            <consortium name="International consortium for macaque cDNA sequencing and analysis"/>
        </authorList>
    </citation>
    <scope>NUCLEOTIDE SEQUENCE [LARGE SCALE MRNA]</scope>
    <source>
        <tissue>Testis</tissue>
    </source>
</reference>
<feature type="transit peptide" description="Mitochondrion" evidence="1">
    <location>
        <begin position="1"/>
        <end position="35"/>
    </location>
</feature>
<feature type="chain" id="PRO_0000030296" description="Dihydrolipoyl dehydrogenase, mitochondrial">
    <location>
        <begin position="36"/>
        <end position="509"/>
    </location>
</feature>
<feature type="active site" description="Proton acceptor" evidence="4">
    <location>
        <position position="487"/>
    </location>
</feature>
<feature type="binding site" evidence="3">
    <location>
        <begin position="71"/>
        <end position="80"/>
    </location>
    <ligand>
        <name>FAD</name>
        <dbReference type="ChEBI" id="CHEBI:57692"/>
    </ligand>
</feature>
<feature type="binding site" evidence="3">
    <location>
        <position position="89"/>
    </location>
    <ligand>
        <name>FAD</name>
        <dbReference type="ChEBI" id="CHEBI:57692"/>
    </ligand>
</feature>
<feature type="binding site" evidence="3">
    <location>
        <position position="154"/>
    </location>
    <ligand>
        <name>FAD</name>
        <dbReference type="ChEBI" id="CHEBI:57692"/>
    </ligand>
</feature>
<feature type="binding site" evidence="3">
    <location>
        <begin position="183"/>
        <end position="185"/>
    </location>
    <ligand>
        <name>FAD</name>
        <dbReference type="ChEBI" id="CHEBI:57692"/>
    </ligand>
</feature>
<feature type="binding site" evidence="3">
    <location>
        <begin position="220"/>
        <end position="227"/>
    </location>
    <ligand>
        <name>NAD(+)</name>
        <dbReference type="ChEBI" id="CHEBI:57540"/>
    </ligand>
</feature>
<feature type="binding site" evidence="3">
    <location>
        <position position="243"/>
    </location>
    <ligand>
        <name>NAD(+)</name>
        <dbReference type="ChEBI" id="CHEBI:57540"/>
    </ligand>
</feature>
<feature type="binding site" evidence="3">
    <location>
        <position position="278"/>
    </location>
    <ligand>
        <name>NAD(+)</name>
        <dbReference type="ChEBI" id="CHEBI:57540"/>
    </ligand>
</feature>
<feature type="binding site" evidence="3">
    <location>
        <position position="314"/>
    </location>
    <ligand>
        <name>NAD(+)</name>
        <dbReference type="ChEBI" id="CHEBI:57540"/>
    </ligand>
</feature>
<feature type="binding site" evidence="3">
    <location>
        <position position="355"/>
    </location>
    <ligand>
        <name>FAD</name>
        <dbReference type="ChEBI" id="CHEBI:57692"/>
    </ligand>
</feature>
<feature type="binding site" evidence="3">
    <location>
        <begin position="361"/>
        <end position="364"/>
    </location>
    <ligand>
        <name>FAD</name>
        <dbReference type="ChEBI" id="CHEBI:57692"/>
    </ligand>
</feature>
<feature type="site" description="Important for interaction with PDHX and activity of pyruvate dehydrogenase complex" evidence="3">
    <location>
        <position position="448"/>
    </location>
</feature>
<feature type="site" description="Important for interaction with PDHX and activity of pyruvate dehydrogenase complex" evidence="3">
    <location>
        <position position="473"/>
    </location>
</feature>
<feature type="modified residue" description="N6-acetyllysine; alternate" evidence="2">
    <location>
        <position position="66"/>
    </location>
</feature>
<feature type="modified residue" description="N6-succinyllysine; alternate" evidence="2">
    <location>
        <position position="66"/>
    </location>
</feature>
<feature type="modified residue" description="N6-acetyllysine; alternate" evidence="2">
    <location>
        <position position="104"/>
    </location>
</feature>
<feature type="modified residue" description="N6-succinyllysine; alternate" evidence="2">
    <location>
        <position position="104"/>
    </location>
</feature>
<feature type="modified residue" description="N6-acetyllysine; alternate" evidence="2">
    <location>
        <position position="122"/>
    </location>
</feature>
<feature type="modified residue" description="N6-succinyllysine; alternate" evidence="2">
    <location>
        <position position="122"/>
    </location>
</feature>
<feature type="modified residue" description="N6-acetyllysine; alternate" evidence="2">
    <location>
        <position position="132"/>
    </location>
</feature>
<feature type="modified residue" description="N6-succinyllysine; alternate" evidence="2">
    <location>
        <position position="132"/>
    </location>
</feature>
<feature type="modified residue" description="N6-acetyllysine; alternate" evidence="3">
    <location>
        <position position="143"/>
    </location>
</feature>
<feature type="modified residue" description="N6-succinyllysine; alternate" evidence="2">
    <location>
        <position position="143"/>
    </location>
</feature>
<feature type="modified residue" description="N6-succinyllysine" evidence="2">
    <location>
        <position position="159"/>
    </location>
</feature>
<feature type="modified residue" description="N6-succinyllysine" evidence="2">
    <location>
        <position position="166"/>
    </location>
</feature>
<feature type="modified residue" description="N6-succinyllysine" evidence="2">
    <location>
        <position position="273"/>
    </location>
</feature>
<feature type="modified residue" description="N6-succinyllysine" evidence="2">
    <location>
        <position position="277"/>
    </location>
</feature>
<feature type="modified residue" description="Phosphoserine" evidence="2">
    <location>
        <position position="285"/>
    </location>
</feature>
<feature type="modified residue" description="Phosphoserine" evidence="5">
    <location>
        <position position="297"/>
    </location>
</feature>
<feature type="modified residue" description="N6-acetyllysine" evidence="2">
    <location>
        <position position="346"/>
    </location>
</feature>
<feature type="modified residue" description="N6-acetyllysine; alternate" evidence="3">
    <location>
        <position position="410"/>
    </location>
</feature>
<feature type="modified residue" description="N6-succinyllysine; alternate" evidence="2">
    <location>
        <position position="410"/>
    </location>
</feature>
<feature type="modified residue" description="N6-acetyllysine" evidence="3">
    <location>
        <position position="417"/>
    </location>
</feature>
<feature type="modified residue" description="N6-acetyllysine" evidence="2">
    <location>
        <position position="420"/>
    </location>
</feature>
<feature type="modified residue" description="N6-succinyllysine" evidence="2">
    <location>
        <position position="430"/>
    </location>
</feature>
<feature type="modified residue" description="Phosphoserine" evidence="3">
    <location>
        <position position="502"/>
    </location>
</feature>
<feature type="modified residue" description="N6-acetyllysine; alternate" evidence="2">
    <location>
        <position position="505"/>
    </location>
</feature>
<feature type="modified residue" description="N6-succinyllysine; alternate" evidence="2">
    <location>
        <position position="505"/>
    </location>
</feature>
<feature type="disulfide bond" description="Redox-active" evidence="4">
    <location>
        <begin position="80"/>
        <end position="85"/>
    </location>
</feature>
<evidence type="ECO:0000250" key="1"/>
<evidence type="ECO:0000250" key="2">
    <source>
        <dbReference type="UniProtKB" id="O08749"/>
    </source>
</evidence>
<evidence type="ECO:0000250" key="3">
    <source>
        <dbReference type="UniProtKB" id="P09622"/>
    </source>
</evidence>
<evidence type="ECO:0000250" key="4">
    <source>
        <dbReference type="UniProtKB" id="P09624"/>
    </source>
</evidence>
<evidence type="ECO:0000250" key="5">
    <source>
        <dbReference type="UniProtKB" id="Q6P6R2"/>
    </source>
</evidence>
<evidence type="ECO:0000250" key="6">
    <source>
        <dbReference type="UniProtKB" id="Q811C4"/>
    </source>
</evidence>
<evidence type="ECO:0000305" key="7"/>
<sequence>MQSWSRVYCSLAKRGHFNRISHGLQGLSAVPLRTYADQLIDADVTVIGSGPGGYVAAIKAAQLGFKTVCVEKNETLGGTCLNVGCIPSKALLNNSHYYHMAHGKDFASRGIEMSEVRLNLDKMMEQKSTAVKALTGGIAHLFKQNKVIHVNGYGKITGKNQVTATKVDGGTQVVDTKNILIATGSEVTPFPGITIDEDTIVSSTGALSLKKVPEKMVVIGAGVIGVELGSVWQRLGADVTAVEFLGHVGGIGIDMEISKNFQRILQKQGFKFKLNTKVTGATKKSDGKIDVSIEAASGGKAEVITCDVLLVCIGRRPFTKNLGLEELGIELDPRGRIPVNTRFQTKIPNIYAIGDVVAGPMLAHKAEDEGIICVEGMAGGAVHIDYNCVPSVIYTHPEVAWVGKSEEQLKEEGIEYKVGKFPFAANSRAKTNADTDGMVKILGQKSTDRVLGAHILGPGAGEMVNEAALALEYGASCEDIARVCHAHPTLSEAFREANLAASFGKSINF</sequence>
<organism>
    <name type="scientific">Macaca fascicularis</name>
    <name type="common">Crab-eating macaque</name>
    <name type="synonym">Cynomolgus monkey</name>
    <dbReference type="NCBI Taxonomy" id="9541"/>
    <lineage>
        <taxon>Eukaryota</taxon>
        <taxon>Metazoa</taxon>
        <taxon>Chordata</taxon>
        <taxon>Craniata</taxon>
        <taxon>Vertebrata</taxon>
        <taxon>Euteleostomi</taxon>
        <taxon>Mammalia</taxon>
        <taxon>Eutheria</taxon>
        <taxon>Euarchontoglires</taxon>
        <taxon>Primates</taxon>
        <taxon>Haplorrhini</taxon>
        <taxon>Catarrhini</taxon>
        <taxon>Cercopithecidae</taxon>
        <taxon>Cercopithecinae</taxon>
        <taxon>Macaca</taxon>
    </lineage>
</organism>
<comment type="function">
    <text evidence="3 6">Lipoamide dehydrogenase is a component of the glycine cleavage system as well as an E3 component of three alpha-ketoacid dehydrogenase complexes (pyruvate-, alpha-ketoglutarate-, and branched-chain amino acid-dehydrogenase complex). The 2-oxoglutarate dehydrogenase complex is mainly active in the mitochondrion. A fraction of the 2-oxoglutarate dehydrogenase complex also localizes in the nucleus and is required for lysine succinylation of histones: associates with KAT2A on chromatin and provides succinyl-CoA to histone succinyltransferase KAT2A. In monomeric form may have additional moonlighting function as serine protease (By similarity). Involved in the hyperactivation of spermatazoa during capacitation and in the spermatazoal acrosome reaction (By similarity).</text>
</comment>
<comment type="catalytic activity">
    <reaction evidence="3">
        <text>N(6)-[(R)-dihydrolipoyl]-L-lysyl-[protein] + NAD(+) = N(6)-[(R)-lipoyl]-L-lysyl-[protein] + NADH + H(+)</text>
        <dbReference type="Rhea" id="RHEA:15045"/>
        <dbReference type="Rhea" id="RHEA-COMP:10474"/>
        <dbReference type="Rhea" id="RHEA-COMP:10475"/>
        <dbReference type="ChEBI" id="CHEBI:15378"/>
        <dbReference type="ChEBI" id="CHEBI:57540"/>
        <dbReference type="ChEBI" id="CHEBI:57945"/>
        <dbReference type="ChEBI" id="CHEBI:83099"/>
        <dbReference type="ChEBI" id="CHEBI:83100"/>
        <dbReference type="EC" id="1.8.1.4"/>
    </reaction>
</comment>
<comment type="cofactor">
    <cofactor evidence="3">
        <name>FAD</name>
        <dbReference type="ChEBI" id="CHEBI:57692"/>
    </cofactor>
    <text evidence="3">Binds 1 FAD per subunit.</text>
</comment>
<comment type="subunit">
    <text evidence="2 3">Homodimer. Part of the multimeric pyruvate dehydrogenase complex that contains multiple copies of pyruvate dehydrogenase (subunits PDHA (PDHA1 or PDHA2) and PDHB, E1), dihydrolipoamide acetyltransferase (DLAT, E2) and lipoamide dehydrogenase (DLD, E3). These subunits are bound to an inner core composed of about 48 DLAT and 12 PDHX molecules (by non covalent bonds). The 2-oxoglutarate dehydrogenase complex is composed of OGDH (2-oxoglutarate dehydrogenase; E1), DLST (dihydrolipoamide succinyltransferase; E2), DLD (dihydrolipoamide dehydrogenase; E3) and the assembly factor KGD4 (By similarity). It contains multiple copies of the three enzymatic components (E1, E2 and E3). In the nucleus, the 2-oxoglutarate dehydrogenase complex associates with KAT2A. Interacts with PDHX.</text>
</comment>
<comment type="subcellular location">
    <subcellularLocation>
        <location evidence="3">Mitochondrion matrix</location>
    </subcellularLocation>
    <subcellularLocation>
        <location evidence="3">Nucleus</location>
    </subcellularLocation>
    <subcellularLocation>
        <location evidence="6">Cell projection</location>
        <location evidence="6">Cilium</location>
        <location evidence="6">Flagellum</location>
    </subcellularLocation>
    <subcellularLocation>
        <location evidence="3">Cytoplasmic vesicle</location>
        <location evidence="3">Secretory vesicle</location>
        <location evidence="3">Acrosome</location>
    </subcellularLocation>
    <text evidence="3">Mainly localizes in the mitochondrion. A small fraction localizes to the nucleus, where the 2-oxoglutarate dehydrogenase complex is required for histone succinylation.</text>
</comment>
<comment type="PTM">
    <text evidence="6">Tyrosine phosphorylated.</text>
</comment>
<comment type="miscellaneous">
    <text evidence="4">The active site is a redox-active disulfide bond.</text>
</comment>
<comment type="similarity">
    <text evidence="7">Belongs to the class-I pyridine nucleotide-disulfide oxidoreductase family.</text>
</comment>
<proteinExistence type="evidence at transcript level"/>
<name>DLDH_MACFA</name>
<dbReference type="EC" id="1.8.1.4" evidence="3"/>
<dbReference type="EMBL" id="AB125164">
    <property type="protein sequence ID" value="BAD51952.1"/>
    <property type="molecule type" value="mRNA"/>
</dbReference>
<dbReference type="EMBL" id="AB168328">
    <property type="protein sequence ID" value="BAE00452.1"/>
    <property type="molecule type" value="mRNA"/>
</dbReference>
<dbReference type="RefSeq" id="NP_001306330.1">
    <property type="nucleotide sequence ID" value="NM_001319401.1"/>
</dbReference>
<dbReference type="SMR" id="Q60HG3"/>
<dbReference type="STRING" id="9541.ENSMFAP00000005624"/>
<dbReference type="eggNOG" id="KOG1335">
    <property type="taxonomic scope" value="Eukaryota"/>
</dbReference>
<dbReference type="OrthoDB" id="361797at2759"/>
<dbReference type="Proteomes" id="UP000233100">
    <property type="component" value="Unplaced"/>
</dbReference>
<dbReference type="GO" id="GO:0001669">
    <property type="term" value="C:acrosomal vesicle"/>
    <property type="evidence" value="ECO:0007669"/>
    <property type="project" value="UniProtKB-SubCell"/>
</dbReference>
<dbReference type="GO" id="GO:0005759">
    <property type="term" value="C:mitochondrial matrix"/>
    <property type="evidence" value="ECO:0007669"/>
    <property type="project" value="UniProtKB-SubCell"/>
</dbReference>
<dbReference type="GO" id="GO:0005739">
    <property type="term" value="C:mitochondrion"/>
    <property type="evidence" value="ECO:0000250"/>
    <property type="project" value="UniProtKB"/>
</dbReference>
<dbReference type="GO" id="GO:0031514">
    <property type="term" value="C:motile cilium"/>
    <property type="evidence" value="ECO:0007669"/>
    <property type="project" value="UniProtKB-SubCell"/>
</dbReference>
<dbReference type="GO" id="GO:0005634">
    <property type="term" value="C:nucleus"/>
    <property type="evidence" value="ECO:0000250"/>
    <property type="project" value="UniProtKB"/>
</dbReference>
<dbReference type="GO" id="GO:0045252">
    <property type="term" value="C:oxoglutarate dehydrogenase complex"/>
    <property type="evidence" value="ECO:0000250"/>
    <property type="project" value="UniProtKB"/>
</dbReference>
<dbReference type="GO" id="GO:0004148">
    <property type="term" value="F:dihydrolipoyl dehydrogenase (NADH) activity"/>
    <property type="evidence" value="ECO:0000250"/>
    <property type="project" value="UniProtKB"/>
</dbReference>
<dbReference type="GO" id="GO:0050660">
    <property type="term" value="F:flavin adenine dinucleotide binding"/>
    <property type="evidence" value="ECO:0007669"/>
    <property type="project" value="InterPro"/>
</dbReference>
<dbReference type="GO" id="GO:0006103">
    <property type="term" value="P:2-oxoglutarate metabolic process"/>
    <property type="evidence" value="ECO:0007669"/>
    <property type="project" value="TreeGrafter"/>
</dbReference>
<dbReference type="FunFam" id="3.30.390.30:FF:000001">
    <property type="entry name" value="Dihydrolipoyl dehydrogenase"/>
    <property type="match status" value="1"/>
</dbReference>
<dbReference type="FunFam" id="3.50.50.60:FF:000025">
    <property type="entry name" value="Dihydrolipoyl dehydrogenase"/>
    <property type="match status" value="1"/>
</dbReference>
<dbReference type="FunFam" id="3.50.50.60:FF:000221">
    <property type="entry name" value="Dihydrolipoyl dehydrogenase, mitochondrial"/>
    <property type="match status" value="1"/>
</dbReference>
<dbReference type="Gene3D" id="3.30.390.30">
    <property type="match status" value="1"/>
</dbReference>
<dbReference type="Gene3D" id="3.50.50.60">
    <property type="entry name" value="FAD/NAD(P)-binding domain"/>
    <property type="match status" value="2"/>
</dbReference>
<dbReference type="InterPro" id="IPR050151">
    <property type="entry name" value="Class-I_Pyr_Nuc-Dis_Oxidored"/>
</dbReference>
<dbReference type="InterPro" id="IPR036188">
    <property type="entry name" value="FAD/NAD-bd_sf"/>
</dbReference>
<dbReference type="InterPro" id="IPR023753">
    <property type="entry name" value="FAD/NAD-binding_dom"/>
</dbReference>
<dbReference type="InterPro" id="IPR016156">
    <property type="entry name" value="FAD/NAD-linked_Rdtase_dimer_sf"/>
</dbReference>
<dbReference type="InterPro" id="IPR006258">
    <property type="entry name" value="Lipoamide_DH"/>
</dbReference>
<dbReference type="InterPro" id="IPR001100">
    <property type="entry name" value="Pyr_nuc-diS_OxRdtase"/>
</dbReference>
<dbReference type="InterPro" id="IPR004099">
    <property type="entry name" value="Pyr_nucl-diS_OxRdtase_dimer"/>
</dbReference>
<dbReference type="InterPro" id="IPR012999">
    <property type="entry name" value="Pyr_OxRdtase_I_AS"/>
</dbReference>
<dbReference type="NCBIfam" id="TIGR01350">
    <property type="entry name" value="lipoamide_DH"/>
    <property type="match status" value="1"/>
</dbReference>
<dbReference type="PANTHER" id="PTHR22912:SF151">
    <property type="entry name" value="DIHYDROLIPOYL DEHYDROGENASE, MITOCHONDRIAL"/>
    <property type="match status" value="1"/>
</dbReference>
<dbReference type="PANTHER" id="PTHR22912">
    <property type="entry name" value="DISULFIDE OXIDOREDUCTASE"/>
    <property type="match status" value="1"/>
</dbReference>
<dbReference type="Pfam" id="PF07992">
    <property type="entry name" value="Pyr_redox_2"/>
    <property type="match status" value="1"/>
</dbReference>
<dbReference type="Pfam" id="PF02852">
    <property type="entry name" value="Pyr_redox_dim"/>
    <property type="match status" value="1"/>
</dbReference>
<dbReference type="PIRSF" id="PIRSF000350">
    <property type="entry name" value="Mercury_reductase_MerA"/>
    <property type="match status" value="1"/>
</dbReference>
<dbReference type="PRINTS" id="PR00368">
    <property type="entry name" value="FADPNR"/>
</dbReference>
<dbReference type="PRINTS" id="PR00411">
    <property type="entry name" value="PNDRDTASEI"/>
</dbReference>
<dbReference type="SUPFAM" id="SSF51905">
    <property type="entry name" value="FAD/NAD(P)-binding domain"/>
    <property type="match status" value="1"/>
</dbReference>
<dbReference type="SUPFAM" id="SSF55424">
    <property type="entry name" value="FAD/NAD-linked reductases, dimerisation (C-terminal) domain"/>
    <property type="match status" value="1"/>
</dbReference>
<dbReference type="PROSITE" id="PS00076">
    <property type="entry name" value="PYRIDINE_REDOX_1"/>
    <property type="match status" value="1"/>
</dbReference>
<gene>
    <name type="primary">DLD</name>
    <name type="ORF">QflA-16416</name>
    <name type="ORF">QtsA-11266</name>
</gene>